<dbReference type="EMBL" id="EU520417">
    <property type="protein sequence ID" value="ACD39754.1"/>
    <property type="molecule type" value="Genomic_DNA"/>
</dbReference>
<dbReference type="EMBL" id="EU520418">
    <property type="protein sequence ID" value="ACD39763.1"/>
    <property type="molecule type" value="Genomic_DNA"/>
</dbReference>
<feature type="chain" id="PRO_0000437613" description="Hypothemycin biosynthesis cluster protein hpm4">
    <location>
        <begin position="1"/>
        <end position="534"/>
    </location>
</feature>
<feature type="region of interest" description="Disordered" evidence="1">
    <location>
        <begin position="34"/>
        <end position="61"/>
    </location>
</feature>
<feature type="region of interest" description="Disordered" evidence="1">
    <location>
        <begin position="110"/>
        <end position="130"/>
    </location>
</feature>
<feature type="region of interest" description="Disordered" evidence="1">
    <location>
        <begin position="236"/>
        <end position="287"/>
    </location>
</feature>
<feature type="compositionally biased region" description="Low complexity" evidence="1">
    <location>
        <begin position="112"/>
        <end position="127"/>
    </location>
</feature>
<feature type="compositionally biased region" description="Low complexity" evidence="1">
    <location>
        <begin position="258"/>
        <end position="275"/>
    </location>
</feature>
<name>HPM4_HYPSB</name>
<comment type="function">
    <text evidence="5 8">Part of the gene cluster that mediates the biosynthesis of hypothemycin, a resorcylic acid lactone (RAL) that irreversibly inhibits a subset of protein kinases with a conserved cysteine in the ATP binding site such as human ERK2 (PubMed:18567690). The first step is performed by both PKSs hmp3 and hmp8 and leads to the production of 7',8'-dehydrozearalenol (DHZ) (PubMed:18567690, PubMed:20222707). The highly reducing PKS hpm8 synthesizes the reduced hexaketide (7S,11S,2E,8E)-7,11-dihydroxy-dodeca-2,8-dienoate, which is transferred downstream to the non-reducing PKS hpm3 (PubMed:20222707). Hpm3 then extends the reduced hexaketide to a nonaketide, after which regioselective cyclization and macrolactonization affords DHZ (PubMed:20222707). The next step is the conversion of DHZ into aigialomycin C and is performed by the O-methyltransferase hmp5, the FAD-binding monooxygenase hmp7, and the cytochrome P450 monooxygenase hmp1 (PubMed:18567690). The wide substrate tolerance of the hmp5 and hmp7 implies that the reactions from DHZ to aigialomycin C can occur in any order (PubMed:18567690). The steps from aigialomycin C to hypothemycin are less well established (PubMed:18567690). The FAD-linked oxidoreductase hmp9 presumably catalyzes oxidation of the C-6' hydroxyl to a ketone (PubMed:18567690). The timing of this oxidation is important, since the resulting enone functional group is a Michael acceptor that can react spontaneously with glutathione, an abundant metabolite in fungal cells (PubMed:18567690). The glutathione S-transferase hmp2 catalyzes cis-trans isomerization of the 7',8' double bond with equilibrium favoring the trans isomer (PubMed:18567690). The hpm6-encoded transporter might preferentially pump hypothemycin out of the cell relative to the trans isomer aigialomycin A. The cis-to-trans isomerization may be coupled with C-4' hydroxylation, since all known hypothemycin analogs containing the enone functional group also have hydroxyl groups at both C-4' and C-5' (PubMed:18567690).</text>
</comment>
<comment type="pathway">
    <text evidence="5">Secondary metabolite biosynthesis.</text>
</comment>
<comment type="biotechnology">
    <text evidence="2 3 4 6 7 9 10 11">Hypothemycin is an antifungal agent that exhibits excellent activity against Peronophythora litchii, which could be helpful for the storage of harvest litchi fruit (PubMed:24106914). Hypothemycin is a strong inhibitor of a subset of MAP kinases such as human ERK2 (PubMed:18571434, PubMed:20118535, PubMed:26371861). It can therefore be used as an anti-cancer drug thanks to its inhibitory activity of Ras-mediated cellular signals (PubMed:10421424, PubMed:10595743). It can also inhibit Trypanosoma brucei kinase TbCLK1 which is a good candidate as a therapeutic target for African trypanosomiasis (PubMed:23853713). Finally, hypothemycin also has inhibitor activity of T cell activation (PubMed:10598882).</text>
</comment>
<evidence type="ECO:0000256" key="1">
    <source>
        <dbReference type="SAM" id="MobiDB-lite"/>
    </source>
</evidence>
<evidence type="ECO:0000269" key="2">
    <source>
    </source>
</evidence>
<evidence type="ECO:0000269" key="3">
    <source>
    </source>
</evidence>
<evidence type="ECO:0000269" key="4">
    <source>
    </source>
</evidence>
<evidence type="ECO:0000269" key="5">
    <source>
    </source>
</evidence>
<evidence type="ECO:0000269" key="6">
    <source>
    </source>
</evidence>
<evidence type="ECO:0000269" key="7">
    <source>
    </source>
</evidence>
<evidence type="ECO:0000269" key="8">
    <source>
    </source>
</evidence>
<evidence type="ECO:0000269" key="9">
    <source>
    </source>
</evidence>
<evidence type="ECO:0000269" key="10">
    <source>
    </source>
</evidence>
<evidence type="ECO:0000269" key="11">
    <source>
    </source>
</evidence>
<evidence type="ECO:0000303" key="12">
    <source>
    </source>
</evidence>
<gene>
    <name evidence="12" type="primary">hpm4</name>
</gene>
<accession>B3FWS0</accession>
<organism>
    <name type="scientific">Hypomyces subiculosus</name>
    <name type="common">Nectria subiculosa</name>
    <dbReference type="NCBI Taxonomy" id="193393"/>
    <lineage>
        <taxon>Eukaryota</taxon>
        <taxon>Fungi</taxon>
        <taxon>Dikarya</taxon>
        <taxon>Ascomycota</taxon>
        <taxon>Pezizomycotina</taxon>
        <taxon>Sordariomycetes</taxon>
        <taxon>Hypocreomycetidae</taxon>
        <taxon>Hypocreales</taxon>
        <taxon>Hypocreaceae</taxon>
        <taxon>Hypomyces</taxon>
    </lineage>
</organism>
<protein>
    <recommendedName>
        <fullName evidence="12">Hypothemycin biosynthesis cluster protein hpm4</fullName>
    </recommendedName>
</protein>
<proteinExistence type="evidence at protein level"/>
<sequence>MSWESPVNYSVGGEDLDLDLGAFLGSLSDFDGQIEPAHSLEDEYSGQSGQGADDDPDSDGPKVLTIMASIDAIHRHLENERKKGNGKANVAIKLKDPTMRKSITFSIPELQSPTTTASSAGSPSCAPLRLPSPEAFDLGEAIFSHPTAGSSFPEEVTPAAEDDVLSSIASPFATPEGLFFPQDEDVLPSIAPLLKAANLAHATEPSLGLISPRATASESSMMPDEEAMADVVQYRDGTGTTPESLSPGDMEQDEWPHTVSSRQTRSRQAARACQTPSTMSTKDKKCIDSSSCSLKQMNSQHQKRNSIETAPSRTIKRPRVESPDLLTLIPNHDEYQRVQELTAALDPLLAYKMVRNARAILPQSVAEDMAHSADMEVDGPLHYQNNQQSPSSQEEIMQQFCETVRRIEWVERAAFKSMVEYRVLFVQLYQHYLRLQEIVVTRKGERRVTLAKEQLYRTLYPGVEKMTSSGLTSDEWEKFNRCIRRGKQWNTIASKLGVGILQRMPSSICHSWVEQKLQTKEQLHIWIEIVSLLA</sequence>
<reference key="1">
    <citation type="journal article" date="2008" name="Appl. Environ. Microbiol.">
        <title>Genes for the biosynthesis of the fungal polyketides hypothemycin from Hypomyces subiculosus and radicicol from Pochonia chlamydosporia.</title>
        <authorList>
            <person name="Reeves C.D."/>
            <person name="Hu Z."/>
            <person name="Reid R."/>
            <person name="Kealey J.T."/>
        </authorList>
    </citation>
    <scope>NUCLEOTIDE SEQUENCE [GENOMIC DNA]</scope>
    <scope>FUNCTION</scope>
    <source>
        <strain>DSM11931</strain>
        <strain>DSM11932</strain>
    </source>
</reference>
<reference key="2">
    <citation type="journal article" date="1999" name="Immunopharmacology">
        <title>Hypothemycin inhibits the proliferative response and modulates the production of cytokines during T cell activation.</title>
        <authorList>
            <person name="Camacho R."/>
            <person name="Staruch M.J."/>
            <person name="DaSilva C."/>
            <person name="Koprak S."/>
            <person name="Sewell T."/>
            <person name="Salituro G."/>
            <person name="Dumont F.J."/>
        </authorList>
    </citation>
    <scope>BIOTECHNOLOGY</scope>
</reference>
<reference key="3">
    <citation type="journal article" date="1999" name="Jpn. J. Cancer Res.">
        <title>Antitumor efficacy of hypothemycin, a new Ras-signaling inhibitor.</title>
        <authorList>
            <person name="Tanaka H."/>
            <person name="Nishida K."/>
            <person name="Sugita K."/>
            <person name="Yoshioka T."/>
        </authorList>
    </citation>
    <scope>BIOTECHNOLOGY</scope>
</reference>
<reference key="4">
    <citation type="journal article" date="1999" name="Life Sci.">
        <title>Suppression of oncogenic transformation by hypothemycin associated with accelerated cyclin D1 degradation through ubiquitin-proteasome pathway.</title>
        <authorList>
            <person name="Sonoda H."/>
            <person name="Omi K."/>
            <person name="Hojo K."/>
            <person name="Nishida K."/>
            <person name="Omura S."/>
            <person name="Sugita K."/>
        </authorList>
    </citation>
    <scope>BIOTECHNOLOGY</scope>
</reference>
<reference key="5">
    <citation type="journal article" date="2008" name="J. Struct. Biol.">
        <title>Molecular modeling and crystal structure of ERK2-hypothemycin complexes.</title>
        <authorList>
            <person name="Rastelli G."/>
            <person name="Rosenfeld R."/>
            <person name="Reid R."/>
            <person name="Santi D.V."/>
        </authorList>
    </citation>
    <scope>BIOTECHNOLOGY</scope>
</reference>
<reference key="6">
    <citation type="journal article" date="2010" name="Biol. Pharm. Bull.">
        <title>The resorcylic acid lactone hypothemycin selectively inhibits the mitogen-activated protein kinase kinase-extracellular signal-regulated kinase pathway in cells.</title>
        <authorList>
            <person name="Fukazawa H."/>
            <person name="Ikeda Y."/>
            <person name="Fukuyama M."/>
            <person name="Suzuki T."/>
            <person name="Hori H."/>
            <person name="Okuda T."/>
            <person name="Uehara Y."/>
        </authorList>
    </citation>
    <scope>BIOTECHNOLOGY</scope>
</reference>
<reference key="7">
    <citation type="journal article" date="2010" name="J. Am. Chem. Soc.">
        <title>Enzymatic synthesis of resorcylic acid lactones by cooperation of fungal iterative polyketide synthases involved in hypothemycin biosynthesis.</title>
        <authorList>
            <person name="Zhou H."/>
            <person name="Qiao K."/>
            <person name="Gao Z."/>
            <person name="Meehan M.J."/>
            <person name="Li J.W."/>
            <person name="Zhao X."/>
            <person name="Dorrestein P.C."/>
            <person name="Vederas J.C."/>
            <person name="Tang Y."/>
        </authorList>
    </citation>
    <scope>FUNCTION</scope>
</reference>
<reference key="8">
    <citation type="journal article" date="2013" name="Elife">
        <title>Hypothemycin, a fungal natural product, identifies therapeutic targets in Trypanosoma brucei [corrected].</title>
        <authorList>
            <person name="Nishino M."/>
            <person name="Choy J.W."/>
            <person name="Gushwa N.N."/>
            <person name="Oses-Prieto J.A."/>
            <person name="Koupparis K."/>
            <person name="Burlingame A.L."/>
            <person name="Renslo A.R."/>
            <person name="McKerrow J.H."/>
            <person name="Taunton J."/>
        </authorList>
    </citation>
    <scope>BIOTECHNOLOGY</scope>
</reference>
<reference key="9">
    <citation type="journal article" date="2013" name="J. Agric. Food Chem.">
        <title>Antifungal activity of hypothemycin against Peronophythora litchii in vitro and in vivo.</title>
        <authorList>
            <person name="Xu L."/>
            <person name="Xue J."/>
            <person name="Wu P."/>
            <person name="Wang D."/>
            <person name="Lin L."/>
            <person name="Jiang Y."/>
            <person name="Duan X."/>
            <person name="Wei X."/>
        </authorList>
    </citation>
    <scope>BIOTECHNOLOGY</scope>
</reference>
<reference key="10">
    <citation type="journal article" date="2015" name="Int. Immunopharmacol.">
        <title>Hypothemycin inhibits tumor necrosis factor-alpha production by tristetraprolin-dependent down-regulation of mRNA stability in lipopolysaccharide-stimulated macrophages.</title>
        <authorList>
            <person name="Park K.H."/>
            <person name="Yoon Y.D."/>
            <person name="Kang M.R."/>
            <person name="Yun J."/>
            <person name="Oh S.J."/>
            <person name="Lee C.W."/>
            <person name="Lee M.Y."/>
            <person name="Han S.B."/>
            <person name="Kim Y."/>
            <person name="Kang J.S."/>
        </authorList>
    </citation>
    <scope>BIOTECHNOLOGY</scope>
</reference>